<name>SYC_NOCFA</name>
<evidence type="ECO:0000255" key="1">
    <source>
        <dbReference type="HAMAP-Rule" id="MF_00041"/>
    </source>
</evidence>
<evidence type="ECO:0000256" key="2">
    <source>
        <dbReference type="SAM" id="MobiDB-lite"/>
    </source>
</evidence>
<feature type="chain" id="PRO_0000159446" description="Cysteine--tRNA ligase">
    <location>
        <begin position="1"/>
        <end position="467"/>
    </location>
</feature>
<feature type="region of interest" description="Disordered" evidence="2">
    <location>
        <begin position="446"/>
        <end position="467"/>
    </location>
</feature>
<feature type="short sequence motif" description="'HIGH' region">
    <location>
        <begin position="31"/>
        <end position="41"/>
    </location>
</feature>
<feature type="short sequence motif" description="'KMSKS' region">
    <location>
        <begin position="263"/>
        <end position="267"/>
    </location>
</feature>
<feature type="binding site" evidence="1">
    <location>
        <position position="29"/>
    </location>
    <ligand>
        <name>Zn(2+)</name>
        <dbReference type="ChEBI" id="CHEBI:29105"/>
    </ligand>
</feature>
<feature type="binding site" evidence="1">
    <location>
        <position position="207"/>
    </location>
    <ligand>
        <name>Zn(2+)</name>
        <dbReference type="ChEBI" id="CHEBI:29105"/>
    </ligand>
</feature>
<feature type="binding site" evidence="1">
    <location>
        <position position="232"/>
    </location>
    <ligand>
        <name>Zn(2+)</name>
        <dbReference type="ChEBI" id="CHEBI:29105"/>
    </ligand>
</feature>
<feature type="binding site" evidence="1">
    <location>
        <position position="236"/>
    </location>
    <ligand>
        <name>Zn(2+)</name>
        <dbReference type="ChEBI" id="CHEBI:29105"/>
    </ligand>
</feature>
<feature type="binding site" evidence="1">
    <location>
        <position position="266"/>
    </location>
    <ligand>
        <name>ATP</name>
        <dbReference type="ChEBI" id="CHEBI:30616"/>
    </ligand>
</feature>
<keyword id="KW-0030">Aminoacyl-tRNA synthetase</keyword>
<keyword id="KW-0067">ATP-binding</keyword>
<keyword id="KW-0963">Cytoplasm</keyword>
<keyword id="KW-0436">Ligase</keyword>
<keyword id="KW-0479">Metal-binding</keyword>
<keyword id="KW-0547">Nucleotide-binding</keyword>
<keyword id="KW-0648">Protein biosynthesis</keyword>
<keyword id="KW-1185">Reference proteome</keyword>
<keyword id="KW-0862">Zinc</keyword>
<protein>
    <recommendedName>
        <fullName evidence="1">Cysteine--tRNA ligase</fullName>
        <ecNumber evidence="1">6.1.1.16</ecNumber>
    </recommendedName>
    <alternativeName>
        <fullName evidence="1">Cysteinyl-tRNA synthetase</fullName>
        <shortName evidence="1">CysRS</shortName>
    </alternativeName>
</protein>
<proteinExistence type="inferred from homology"/>
<reference key="1">
    <citation type="journal article" date="2004" name="Proc. Natl. Acad. Sci. U.S.A.">
        <title>The complete genomic sequence of Nocardia farcinica IFM 10152.</title>
        <authorList>
            <person name="Ishikawa J."/>
            <person name="Yamashita A."/>
            <person name="Mikami Y."/>
            <person name="Hoshino Y."/>
            <person name="Kurita H."/>
            <person name="Hotta K."/>
            <person name="Shiba T."/>
            <person name="Hattori M."/>
        </authorList>
    </citation>
    <scope>NUCLEOTIDE SEQUENCE [LARGE SCALE GENOMIC DNA]</scope>
    <source>
        <strain>IFM 10152</strain>
    </source>
</reference>
<comment type="catalytic activity">
    <reaction evidence="1">
        <text>tRNA(Cys) + L-cysteine + ATP = L-cysteinyl-tRNA(Cys) + AMP + diphosphate</text>
        <dbReference type="Rhea" id="RHEA:17773"/>
        <dbReference type="Rhea" id="RHEA-COMP:9661"/>
        <dbReference type="Rhea" id="RHEA-COMP:9679"/>
        <dbReference type="ChEBI" id="CHEBI:30616"/>
        <dbReference type="ChEBI" id="CHEBI:33019"/>
        <dbReference type="ChEBI" id="CHEBI:35235"/>
        <dbReference type="ChEBI" id="CHEBI:78442"/>
        <dbReference type="ChEBI" id="CHEBI:78517"/>
        <dbReference type="ChEBI" id="CHEBI:456215"/>
        <dbReference type="EC" id="6.1.1.16"/>
    </reaction>
</comment>
<comment type="cofactor">
    <cofactor evidence="1">
        <name>Zn(2+)</name>
        <dbReference type="ChEBI" id="CHEBI:29105"/>
    </cofactor>
    <text evidence="1">Binds 1 zinc ion per subunit.</text>
</comment>
<comment type="subunit">
    <text evidence="1">Monomer.</text>
</comment>
<comment type="subcellular location">
    <subcellularLocation>
        <location evidence="1">Cytoplasm</location>
    </subcellularLocation>
</comment>
<comment type="similarity">
    <text evidence="1">Belongs to the class-I aminoacyl-tRNA synthetase family.</text>
</comment>
<gene>
    <name evidence="1" type="primary">cysS</name>
    <name type="synonym">cysS1</name>
    <name type="ordered locus">NFA_4380</name>
</gene>
<sequence length="467" mass="52087">MTLRLFDTESRTMREFAPLVPGRASVYLCGATVQGEPHIGHVRSGVAFDVLRRWLQAHDYDVWFIRNVTDIDDKILNKAAEAGRPWWEWAATYERAFDRAYRLLGVQPPSAEPRATGHITQMVELMRRLIERGHAYASAGNVYFDVQSYPEYGALSGHKLDDVHQGESAGEGKRDPRDFTLWKAAKPGEPSWPSPWGPGRPGWHLECSAMAEFYLGAEFDIHCGGMDLVFPHHENEIAQSKAAGDGFARYWLHNGWVTMGGEKMSKSLGNVLSVPNMLTKVRAVELRFYLGSAHYRSMLEYSDKALDDAVAGYQRIEAFLHRTAERVGEIPVGKWTDAFAEAMDDDLAVPRALAEVFRLVTEGNKALEAGAVDTARELGGQVRAMLGILGVCPFDPQWDHKQDDSVAQTALDVLVRAELDRRQQARADKDWATADAVRDRLHAAGIDVTDTPNGPEWSLRTARGKAN</sequence>
<accession>Q5Z2R1</accession>
<organism>
    <name type="scientific">Nocardia farcinica (strain IFM 10152)</name>
    <dbReference type="NCBI Taxonomy" id="247156"/>
    <lineage>
        <taxon>Bacteria</taxon>
        <taxon>Bacillati</taxon>
        <taxon>Actinomycetota</taxon>
        <taxon>Actinomycetes</taxon>
        <taxon>Mycobacteriales</taxon>
        <taxon>Nocardiaceae</taxon>
        <taxon>Nocardia</taxon>
    </lineage>
</organism>
<dbReference type="EC" id="6.1.1.16" evidence="1"/>
<dbReference type="EMBL" id="AP006618">
    <property type="protein sequence ID" value="BAD55280.1"/>
    <property type="molecule type" value="Genomic_DNA"/>
</dbReference>
<dbReference type="RefSeq" id="WP_011206967.1">
    <property type="nucleotide sequence ID" value="NC_006361.1"/>
</dbReference>
<dbReference type="SMR" id="Q5Z2R1"/>
<dbReference type="STRING" id="247156.NFA_4380"/>
<dbReference type="GeneID" id="61131274"/>
<dbReference type="KEGG" id="nfa:NFA_4380"/>
<dbReference type="eggNOG" id="COG0215">
    <property type="taxonomic scope" value="Bacteria"/>
</dbReference>
<dbReference type="HOGENOM" id="CLU_013528_0_1_11"/>
<dbReference type="OrthoDB" id="9815130at2"/>
<dbReference type="Proteomes" id="UP000006820">
    <property type="component" value="Chromosome"/>
</dbReference>
<dbReference type="GO" id="GO:0005829">
    <property type="term" value="C:cytosol"/>
    <property type="evidence" value="ECO:0007669"/>
    <property type="project" value="TreeGrafter"/>
</dbReference>
<dbReference type="GO" id="GO:0005524">
    <property type="term" value="F:ATP binding"/>
    <property type="evidence" value="ECO:0007669"/>
    <property type="project" value="UniProtKB-UniRule"/>
</dbReference>
<dbReference type="GO" id="GO:0004817">
    <property type="term" value="F:cysteine-tRNA ligase activity"/>
    <property type="evidence" value="ECO:0007669"/>
    <property type="project" value="UniProtKB-UniRule"/>
</dbReference>
<dbReference type="GO" id="GO:0008270">
    <property type="term" value="F:zinc ion binding"/>
    <property type="evidence" value="ECO:0007669"/>
    <property type="project" value="UniProtKB-UniRule"/>
</dbReference>
<dbReference type="GO" id="GO:0006423">
    <property type="term" value="P:cysteinyl-tRNA aminoacylation"/>
    <property type="evidence" value="ECO:0007669"/>
    <property type="project" value="UniProtKB-UniRule"/>
</dbReference>
<dbReference type="CDD" id="cd00672">
    <property type="entry name" value="CysRS_core"/>
    <property type="match status" value="1"/>
</dbReference>
<dbReference type="FunFam" id="3.40.50.620:FF:000068">
    <property type="entry name" value="Cysteine--tRNA ligase"/>
    <property type="match status" value="1"/>
</dbReference>
<dbReference type="Gene3D" id="1.20.120.1910">
    <property type="entry name" value="Cysteine-tRNA ligase, C-terminal anti-codon recognition domain"/>
    <property type="match status" value="1"/>
</dbReference>
<dbReference type="Gene3D" id="3.40.50.620">
    <property type="entry name" value="HUPs"/>
    <property type="match status" value="1"/>
</dbReference>
<dbReference type="HAMAP" id="MF_00041">
    <property type="entry name" value="Cys_tRNA_synth"/>
    <property type="match status" value="1"/>
</dbReference>
<dbReference type="InterPro" id="IPR015803">
    <property type="entry name" value="Cys-tRNA-ligase"/>
</dbReference>
<dbReference type="InterPro" id="IPR015273">
    <property type="entry name" value="Cys-tRNA-synt_Ia_DALR"/>
</dbReference>
<dbReference type="InterPro" id="IPR024909">
    <property type="entry name" value="Cys-tRNA/MSH_ligase"/>
</dbReference>
<dbReference type="InterPro" id="IPR056411">
    <property type="entry name" value="CysS_C"/>
</dbReference>
<dbReference type="InterPro" id="IPR014729">
    <property type="entry name" value="Rossmann-like_a/b/a_fold"/>
</dbReference>
<dbReference type="InterPro" id="IPR032678">
    <property type="entry name" value="tRNA-synt_1_cat_dom"/>
</dbReference>
<dbReference type="InterPro" id="IPR009080">
    <property type="entry name" value="tRNAsynth_Ia_anticodon-bd"/>
</dbReference>
<dbReference type="NCBIfam" id="TIGR00435">
    <property type="entry name" value="cysS"/>
    <property type="match status" value="1"/>
</dbReference>
<dbReference type="PANTHER" id="PTHR10890:SF30">
    <property type="entry name" value="CYSTEINE--TRNA LIGASE"/>
    <property type="match status" value="1"/>
</dbReference>
<dbReference type="PANTHER" id="PTHR10890">
    <property type="entry name" value="CYSTEINYL-TRNA SYNTHETASE"/>
    <property type="match status" value="1"/>
</dbReference>
<dbReference type="Pfam" id="PF23493">
    <property type="entry name" value="CysS_C"/>
    <property type="match status" value="1"/>
</dbReference>
<dbReference type="Pfam" id="PF09190">
    <property type="entry name" value="DALR_2"/>
    <property type="match status" value="1"/>
</dbReference>
<dbReference type="Pfam" id="PF01406">
    <property type="entry name" value="tRNA-synt_1e"/>
    <property type="match status" value="1"/>
</dbReference>
<dbReference type="PRINTS" id="PR00983">
    <property type="entry name" value="TRNASYNTHCYS"/>
</dbReference>
<dbReference type="SMART" id="SM00840">
    <property type="entry name" value="DALR_2"/>
    <property type="match status" value="1"/>
</dbReference>
<dbReference type="SUPFAM" id="SSF47323">
    <property type="entry name" value="Anticodon-binding domain of a subclass of class I aminoacyl-tRNA synthetases"/>
    <property type="match status" value="1"/>
</dbReference>
<dbReference type="SUPFAM" id="SSF52374">
    <property type="entry name" value="Nucleotidylyl transferase"/>
    <property type="match status" value="1"/>
</dbReference>